<evidence type="ECO:0000255" key="1">
    <source>
        <dbReference type="HAMAP-Rule" id="MF_01964"/>
    </source>
</evidence>
<evidence type="ECO:0000256" key="2">
    <source>
        <dbReference type="SAM" id="MobiDB-lite"/>
    </source>
</evidence>
<reference key="1">
    <citation type="journal article" date="2005" name="Proc. Natl. Acad. Sci. U.S.A.">
        <title>Whole genome sequence of Staphylococcus saprophyticus reveals the pathogenesis of uncomplicated urinary tract infection.</title>
        <authorList>
            <person name="Kuroda M."/>
            <person name="Yamashita A."/>
            <person name="Hirakawa H."/>
            <person name="Kumano M."/>
            <person name="Morikawa K."/>
            <person name="Higashide M."/>
            <person name="Maruyama A."/>
            <person name="Inose Y."/>
            <person name="Matoba K."/>
            <person name="Toh H."/>
            <person name="Kuhara S."/>
            <person name="Hattori M."/>
            <person name="Ohta T."/>
        </authorList>
    </citation>
    <scope>NUCLEOTIDE SEQUENCE [LARGE SCALE GENOMIC DNA]</scope>
    <source>
        <strain>ATCC 15305 / DSM 20229 / NCIMB 8711 / NCTC 7292 / S-41</strain>
    </source>
</reference>
<keyword id="KW-0129">CBS domain</keyword>
<keyword id="KW-0332">GMP biosynthesis</keyword>
<keyword id="KW-0479">Metal-binding</keyword>
<keyword id="KW-0520">NAD</keyword>
<keyword id="KW-0560">Oxidoreductase</keyword>
<keyword id="KW-0630">Potassium</keyword>
<keyword id="KW-0658">Purine biosynthesis</keyword>
<keyword id="KW-1185">Reference proteome</keyword>
<keyword id="KW-0677">Repeat</keyword>
<proteinExistence type="inferred from homology"/>
<accession>Q49UU8</accession>
<name>IMDH_STAS1</name>
<gene>
    <name evidence="1" type="primary">guaB</name>
    <name type="ordered locus">SSP2323</name>
</gene>
<protein>
    <recommendedName>
        <fullName evidence="1">Inosine-5'-monophosphate dehydrogenase</fullName>
        <shortName evidence="1">IMP dehydrogenase</shortName>
        <shortName evidence="1">IMPD</shortName>
        <shortName evidence="1">IMPDH</shortName>
        <ecNumber evidence="1">1.1.1.205</ecNumber>
    </recommendedName>
</protein>
<comment type="function">
    <text evidence="1">Catalyzes the conversion of inosine 5'-phosphate (IMP) to xanthosine 5'-phosphate (XMP), the first committed and rate-limiting step in the de novo synthesis of guanine nucleotides, and therefore plays an important role in the regulation of cell growth.</text>
</comment>
<comment type="catalytic activity">
    <reaction evidence="1">
        <text>IMP + NAD(+) + H2O = XMP + NADH + H(+)</text>
        <dbReference type="Rhea" id="RHEA:11708"/>
        <dbReference type="ChEBI" id="CHEBI:15377"/>
        <dbReference type="ChEBI" id="CHEBI:15378"/>
        <dbReference type="ChEBI" id="CHEBI:57464"/>
        <dbReference type="ChEBI" id="CHEBI:57540"/>
        <dbReference type="ChEBI" id="CHEBI:57945"/>
        <dbReference type="ChEBI" id="CHEBI:58053"/>
        <dbReference type="EC" id="1.1.1.205"/>
    </reaction>
</comment>
<comment type="cofactor">
    <cofactor evidence="1">
        <name>K(+)</name>
        <dbReference type="ChEBI" id="CHEBI:29103"/>
    </cofactor>
</comment>
<comment type="activity regulation">
    <text evidence="1">Mycophenolic acid (MPA) is a non-competitive inhibitor that prevents formation of the closed enzyme conformation by binding to the same site as the amobile flap. In contrast, mizoribine monophosphate (MZP) is a competitive inhibitor that induces the closed conformation. MPA is a potent inhibitor of mammalian IMPDHs but a poor inhibitor of the bacterial enzymes. MZP is a more potent inhibitor of bacterial IMPDH.</text>
</comment>
<comment type="pathway">
    <text evidence="1">Purine metabolism; XMP biosynthesis via de novo pathway; XMP from IMP: step 1/1.</text>
</comment>
<comment type="subunit">
    <text evidence="1">Homotetramer.</text>
</comment>
<comment type="similarity">
    <text evidence="1">Belongs to the IMPDH/GMPR family.</text>
</comment>
<sequence>MWENKFEKESLTFDDVLLLPAESDVLPKEVDLSVQLSEGIKLNIPVISAGMDTVTESKMAISMARQGGLGVIHKNMNIEDQADEVQKVKRSENGVISNPFFLTPEESVFEAEALMGKYRISGVPIVNNKEDRQFVGIITNRDLRFIEDFSIKISDVMTKEQLVTAPVGTTLDEAEKLLQQHKIEKLPLVKEGRLEGLITIKDIEKVLEFPNSAKDEHGRLLVGAAIGIAKDTDIRAQKLVEAGVDALVIDTAHGHSKGVLEQVKHIKETFPQVTLIAGNVATAEGTKALYEAGADVVKVGIGPGSICTTRVVAGVGVPQITAVYDCATEARKHGKAIIADGGIKFSGDIIKALAAGGHAVMLGSLLAGTEESPGATEVFQGRQYKVYRGMGSLGAMESGSNDRYFQEDKAPKKFVPEGIEGRIAYKGSLQDTIYQLMGGVRSGMGYTGSRNLEALREEAQFTRMGPAGLAESHPHDVQITKESPNYSF</sequence>
<dbReference type="EC" id="1.1.1.205" evidence="1"/>
<dbReference type="EMBL" id="AP008934">
    <property type="protein sequence ID" value="BAE19468.1"/>
    <property type="molecule type" value="Genomic_DNA"/>
</dbReference>
<dbReference type="RefSeq" id="WP_002484264.1">
    <property type="nucleotide sequence ID" value="NZ_MTGA01000035.1"/>
</dbReference>
<dbReference type="SMR" id="Q49UU8"/>
<dbReference type="GeneID" id="66868491"/>
<dbReference type="KEGG" id="ssp:SSP2323"/>
<dbReference type="eggNOG" id="COG0516">
    <property type="taxonomic scope" value="Bacteria"/>
</dbReference>
<dbReference type="eggNOG" id="COG0517">
    <property type="taxonomic scope" value="Bacteria"/>
</dbReference>
<dbReference type="HOGENOM" id="CLU_022552_2_0_9"/>
<dbReference type="OrthoDB" id="9805398at2"/>
<dbReference type="UniPathway" id="UPA00601">
    <property type="reaction ID" value="UER00295"/>
</dbReference>
<dbReference type="Proteomes" id="UP000006371">
    <property type="component" value="Chromosome"/>
</dbReference>
<dbReference type="GO" id="GO:0003938">
    <property type="term" value="F:IMP dehydrogenase activity"/>
    <property type="evidence" value="ECO:0007669"/>
    <property type="project" value="UniProtKB-UniRule"/>
</dbReference>
<dbReference type="GO" id="GO:0046872">
    <property type="term" value="F:metal ion binding"/>
    <property type="evidence" value="ECO:0007669"/>
    <property type="project" value="UniProtKB-UniRule"/>
</dbReference>
<dbReference type="GO" id="GO:0000166">
    <property type="term" value="F:nucleotide binding"/>
    <property type="evidence" value="ECO:0007669"/>
    <property type="project" value="UniProtKB-UniRule"/>
</dbReference>
<dbReference type="GO" id="GO:0006177">
    <property type="term" value="P:GMP biosynthetic process"/>
    <property type="evidence" value="ECO:0007669"/>
    <property type="project" value="UniProtKB-UniRule"/>
</dbReference>
<dbReference type="GO" id="GO:0006183">
    <property type="term" value="P:GTP biosynthetic process"/>
    <property type="evidence" value="ECO:0007669"/>
    <property type="project" value="TreeGrafter"/>
</dbReference>
<dbReference type="CDD" id="cd04601">
    <property type="entry name" value="CBS_pair_IMPDH"/>
    <property type="match status" value="1"/>
</dbReference>
<dbReference type="CDD" id="cd00381">
    <property type="entry name" value="IMPDH"/>
    <property type="match status" value="1"/>
</dbReference>
<dbReference type="FunFam" id="3.20.20.70:FF:000003">
    <property type="entry name" value="GMP reductase"/>
    <property type="match status" value="1"/>
</dbReference>
<dbReference type="Gene3D" id="3.20.20.70">
    <property type="entry name" value="Aldolase class I"/>
    <property type="match status" value="1"/>
</dbReference>
<dbReference type="HAMAP" id="MF_01964">
    <property type="entry name" value="IMPDH"/>
    <property type="match status" value="1"/>
</dbReference>
<dbReference type="InterPro" id="IPR013785">
    <property type="entry name" value="Aldolase_TIM"/>
</dbReference>
<dbReference type="InterPro" id="IPR000644">
    <property type="entry name" value="CBS_dom"/>
</dbReference>
<dbReference type="InterPro" id="IPR046342">
    <property type="entry name" value="CBS_dom_sf"/>
</dbReference>
<dbReference type="InterPro" id="IPR005990">
    <property type="entry name" value="IMP_DH"/>
</dbReference>
<dbReference type="InterPro" id="IPR015875">
    <property type="entry name" value="IMP_DH/GMP_Rdtase_CS"/>
</dbReference>
<dbReference type="InterPro" id="IPR001093">
    <property type="entry name" value="IMP_DH_GMPRt"/>
</dbReference>
<dbReference type="NCBIfam" id="TIGR01302">
    <property type="entry name" value="IMP_dehydrog"/>
    <property type="match status" value="1"/>
</dbReference>
<dbReference type="PANTHER" id="PTHR11911:SF111">
    <property type="entry name" value="INOSINE-5'-MONOPHOSPHATE DEHYDROGENASE"/>
    <property type="match status" value="1"/>
</dbReference>
<dbReference type="PANTHER" id="PTHR11911">
    <property type="entry name" value="INOSINE-5-MONOPHOSPHATE DEHYDROGENASE RELATED"/>
    <property type="match status" value="1"/>
</dbReference>
<dbReference type="Pfam" id="PF00571">
    <property type="entry name" value="CBS"/>
    <property type="match status" value="2"/>
</dbReference>
<dbReference type="Pfam" id="PF00478">
    <property type="entry name" value="IMPDH"/>
    <property type="match status" value="1"/>
</dbReference>
<dbReference type="PIRSF" id="PIRSF000130">
    <property type="entry name" value="IMPDH"/>
    <property type="match status" value="1"/>
</dbReference>
<dbReference type="SMART" id="SM00116">
    <property type="entry name" value="CBS"/>
    <property type="match status" value="2"/>
</dbReference>
<dbReference type="SMART" id="SM01240">
    <property type="entry name" value="IMPDH"/>
    <property type="match status" value="1"/>
</dbReference>
<dbReference type="SUPFAM" id="SSF54631">
    <property type="entry name" value="CBS-domain pair"/>
    <property type="match status" value="1"/>
</dbReference>
<dbReference type="SUPFAM" id="SSF51412">
    <property type="entry name" value="Inosine monophosphate dehydrogenase (IMPDH)"/>
    <property type="match status" value="1"/>
</dbReference>
<dbReference type="PROSITE" id="PS51371">
    <property type="entry name" value="CBS"/>
    <property type="match status" value="2"/>
</dbReference>
<dbReference type="PROSITE" id="PS00487">
    <property type="entry name" value="IMP_DH_GMP_RED"/>
    <property type="match status" value="1"/>
</dbReference>
<feature type="chain" id="PRO_0000287363" description="Inosine-5'-monophosphate dehydrogenase">
    <location>
        <begin position="1"/>
        <end position="488"/>
    </location>
</feature>
<feature type="domain" description="CBS 1" evidence="1">
    <location>
        <begin position="95"/>
        <end position="153"/>
    </location>
</feature>
<feature type="domain" description="CBS 2" evidence="1">
    <location>
        <begin position="157"/>
        <end position="216"/>
    </location>
</feature>
<feature type="region of interest" description="Disordered" evidence="2">
    <location>
        <begin position="467"/>
        <end position="488"/>
    </location>
</feature>
<feature type="active site" description="Thioimidate intermediate" evidence="1">
    <location>
        <position position="307"/>
    </location>
</feature>
<feature type="active site" description="Proton acceptor" evidence="1">
    <location>
        <position position="403"/>
    </location>
</feature>
<feature type="binding site" evidence="1">
    <location>
        <position position="250"/>
    </location>
    <ligand>
        <name>NAD(+)</name>
        <dbReference type="ChEBI" id="CHEBI:57540"/>
    </ligand>
</feature>
<feature type="binding site" evidence="1">
    <location>
        <begin position="300"/>
        <end position="302"/>
    </location>
    <ligand>
        <name>NAD(+)</name>
        <dbReference type="ChEBI" id="CHEBI:57540"/>
    </ligand>
</feature>
<feature type="binding site" description="in other chain" evidence="1">
    <location>
        <position position="302"/>
    </location>
    <ligand>
        <name>K(+)</name>
        <dbReference type="ChEBI" id="CHEBI:29103"/>
        <note>ligand shared between two tetrameric partners</note>
    </ligand>
</feature>
<feature type="binding site" description="in other chain" evidence="1">
    <location>
        <position position="304"/>
    </location>
    <ligand>
        <name>K(+)</name>
        <dbReference type="ChEBI" id="CHEBI:29103"/>
        <note>ligand shared between two tetrameric partners</note>
    </ligand>
</feature>
<feature type="binding site" evidence="1">
    <location>
        <position position="305"/>
    </location>
    <ligand>
        <name>IMP</name>
        <dbReference type="ChEBI" id="CHEBI:58053"/>
    </ligand>
</feature>
<feature type="binding site" description="in other chain" evidence="1">
    <location>
        <position position="307"/>
    </location>
    <ligand>
        <name>K(+)</name>
        <dbReference type="ChEBI" id="CHEBI:29103"/>
        <note>ligand shared between two tetrameric partners</note>
    </ligand>
</feature>
<feature type="binding site" evidence="1">
    <location>
        <begin position="340"/>
        <end position="342"/>
    </location>
    <ligand>
        <name>IMP</name>
        <dbReference type="ChEBI" id="CHEBI:58053"/>
    </ligand>
</feature>
<feature type="binding site" evidence="1">
    <location>
        <begin position="363"/>
        <end position="364"/>
    </location>
    <ligand>
        <name>IMP</name>
        <dbReference type="ChEBI" id="CHEBI:58053"/>
    </ligand>
</feature>
<feature type="binding site" evidence="1">
    <location>
        <begin position="387"/>
        <end position="391"/>
    </location>
    <ligand>
        <name>IMP</name>
        <dbReference type="ChEBI" id="CHEBI:58053"/>
    </ligand>
</feature>
<feature type="binding site" evidence="1">
    <location>
        <position position="417"/>
    </location>
    <ligand>
        <name>IMP</name>
        <dbReference type="ChEBI" id="CHEBI:58053"/>
    </ligand>
</feature>
<feature type="binding site" evidence="1">
    <location>
        <position position="471"/>
    </location>
    <ligand>
        <name>K(+)</name>
        <dbReference type="ChEBI" id="CHEBI:29103"/>
        <note>ligand shared between two tetrameric partners</note>
    </ligand>
</feature>
<feature type="binding site" evidence="1">
    <location>
        <position position="472"/>
    </location>
    <ligand>
        <name>K(+)</name>
        <dbReference type="ChEBI" id="CHEBI:29103"/>
        <note>ligand shared between two tetrameric partners</note>
    </ligand>
</feature>
<feature type="binding site" evidence="1">
    <location>
        <position position="473"/>
    </location>
    <ligand>
        <name>K(+)</name>
        <dbReference type="ChEBI" id="CHEBI:29103"/>
        <note>ligand shared between two tetrameric partners</note>
    </ligand>
</feature>
<organism>
    <name type="scientific">Staphylococcus saprophyticus subsp. saprophyticus (strain ATCC 15305 / DSM 20229 / NCIMB 8711 / NCTC 7292 / S-41)</name>
    <dbReference type="NCBI Taxonomy" id="342451"/>
    <lineage>
        <taxon>Bacteria</taxon>
        <taxon>Bacillati</taxon>
        <taxon>Bacillota</taxon>
        <taxon>Bacilli</taxon>
        <taxon>Bacillales</taxon>
        <taxon>Staphylococcaceae</taxon>
        <taxon>Staphylococcus</taxon>
    </lineage>
</organism>